<proteinExistence type="inferred from homology"/>
<accession>C0SP98</accession>
<accession>O34480</accession>
<accession>Q796M3</accession>
<organism>
    <name type="scientific">Bacillus subtilis (strain 168)</name>
    <dbReference type="NCBI Taxonomy" id="224308"/>
    <lineage>
        <taxon>Bacteria</taxon>
        <taxon>Bacillati</taxon>
        <taxon>Bacillota</taxon>
        <taxon>Bacilli</taxon>
        <taxon>Bacillales</taxon>
        <taxon>Bacillaceae</taxon>
        <taxon>Bacillus</taxon>
    </lineage>
</organism>
<evidence type="ECO:0000255" key="1">
    <source>
        <dbReference type="PROSITE-ProRule" id="PRU00434"/>
    </source>
</evidence>
<evidence type="ECO:0000305" key="2"/>
<comment type="similarity">
    <text evidence="2">Belongs to the ABC transporter superfamily.</text>
</comment>
<comment type="sequence caution" evidence="2">
    <conflict type="frameshift">
        <sequence resource="EMBL-CDS" id="CAA05580"/>
    </conflict>
</comment>
<keyword id="KW-0067">ATP-binding</keyword>
<keyword id="KW-0547">Nucleotide-binding</keyword>
<keyword id="KW-1185">Reference proteome</keyword>
<keyword id="KW-1278">Translocase</keyword>
<keyword id="KW-0813">Transport</keyword>
<sequence length="329" mass="37285">MRRLPLLEVSQLKMHFDAGKKRTVKAVDGVTFQIREGETFGLVGESGCGKSTLGRVLMRLYQPTEGSVTYRGTNLHALSEKEQFAFNRKLQMIFQDPYASLNPRMTVREIILEPMEIHNLYNTHKARLLVVDELLEAVGLHPDFGSRYPHEFSGGQRQRIGIARALSLNPEFIVADEPISALDVSVQAQVVNLLKRLQKEKGLTFLFIAHDLSMVKHISDRIGVMYLGHMMEITESGTLYREPLHPYTKALLSSIPIPDPELEDKRERILLKGELPSPVNPPSGCVFRTRCPEAMPECGESRPQLQEIEPGRFVACHLYRNAETKEKVR</sequence>
<protein>
    <recommendedName>
        <fullName>Putative oligopeptide transport ATP-binding protein YkfD</fullName>
        <ecNumber>7.4.2.-</ecNumber>
    </recommendedName>
</protein>
<name>YKFD_BACSU</name>
<reference key="1">
    <citation type="submission" date="1997-11" db="EMBL/GenBank/DDBJ databases">
        <title>Sequence of the Bacillus subtilis genome between xlyA and ykoR.</title>
        <authorList>
            <person name="Devine K.M."/>
        </authorList>
    </citation>
    <scope>NUCLEOTIDE SEQUENCE [GENOMIC DNA]</scope>
    <source>
        <strain>168</strain>
    </source>
</reference>
<reference key="2">
    <citation type="journal article" date="1997" name="Nature">
        <title>The complete genome sequence of the Gram-positive bacterium Bacillus subtilis.</title>
        <authorList>
            <person name="Kunst F."/>
            <person name="Ogasawara N."/>
            <person name="Moszer I."/>
            <person name="Albertini A.M."/>
            <person name="Alloni G."/>
            <person name="Azevedo V."/>
            <person name="Bertero M.G."/>
            <person name="Bessieres P."/>
            <person name="Bolotin A."/>
            <person name="Borchert S."/>
            <person name="Borriss R."/>
            <person name="Boursier L."/>
            <person name="Brans A."/>
            <person name="Braun M."/>
            <person name="Brignell S.C."/>
            <person name="Bron S."/>
            <person name="Brouillet S."/>
            <person name="Bruschi C.V."/>
            <person name="Caldwell B."/>
            <person name="Capuano V."/>
            <person name="Carter N.M."/>
            <person name="Choi S.-K."/>
            <person name="Codani J.-J."/>
            <person name="Connerton I.F."/>
            <person name="Cummings N.J."/>
            <person name="Daniel R.A."/>
            <person name="Denizot F."/>
            <person name="Devine K.M."/>
            <person name="Duesterhoeft A."/>
            <person name="Ehrlich S.D."/>
            <person name="Emmerson P.T."/>
            <person name="Entian K.-D."/>
            <person name="Errington J."/>
            <person name="Fabret C."/>
            <person name="Ferrari E."/>
            <person name="Foulger D."/>
            <person name="Fritz C."/>
            <person name="Fujita M."/>
            <person name="Fujita Y."/>
            <person name="Fuma S."/>
            <person name="Galizzi A."/>
            <person name="Galleron N."/>
            <person name="Ghim S.-Y."/>
            <person name="Glaser P."/>
            <person name="Goffeau A."/>
            <person name="Golightly E.J."/>
            <person name="Grandi G."/>
            <person name="Guiseppi G."/>
            <person name="Guy B.J."/>
            <person name="Haga K."/>
            <person name="Haiech J."/>
            <person name="Harwood C.R."/>
            <person name="Henaut A."/>
            <person name="Hilbert H."/>
            <person name="Holsappel S."/>
            <person name="Hosono S."/>
            <person name="Hullo M.-F."/>
            <person name="Itaya M."/>
            <person name="Jones L.-M."/>
            <person name="Joris B."/>
            <person name="Karamata D."/>
            <person name="Kasahara Y."/>
            <person name="Klaerr-Blanchard M."/>
            <person name="Klein C."/>
            <person name="Kobayashi Y."/>
            <person name="Koetter P."/>
            <person name="Koningstein G."/>
            <person name="Krogh S."/>
            <person name="Kumano M."/>
            <person name="Kurita K."/>
            <person name="Lapidus A."/>
            <person name="Lardinois S."/>
            <person name="Lauber J."/>
            <person name="Lazarevic V."/>
            <person name="Lee S.-M."/>
            <person name="Levine A."/>
            <person name="Liu H."/>
            <person name="Masuda S."/>
            <person name="Mauel C."/>
            <person name="Medigue C."/>
            <person name="Medina N."/>
            <person name="Mellado R.P."/>
            <person name="Mizuno M."/>
            <person name="Moestl D."/>
            <person name="Nakai S."/>
            <person name="Noback M."/>
            <person name="Noone D."/>
            <person name="O'Reilly M."/>
            <person name="Ogawa K."/>
            <person name="Ogiwara A."/>
            <person name="Oudega B."/>
            <person name="Park S.-H."/>
            <person name="Parro V."/>
            <person name="Pohl T.M."/>
            <person name="Portetelle D."/>
            <person name="Porwollik S."/>
            <person name="Prescott A.M."/>
            <person name="Presecan E."/>
            <person name="Pujic P."/>
            <person name="Purnelle B."/>
            <person name="Rapoport G."/>
            <person name="Rey M."/>
            <person name="Reynolds S."/>
            <person name="Rieger M."/>
            <person name="Rivolta C."/>
            <person name="Rocha E."/>
            <person name="Roche B."/>
            <person name="Rose M."/>
            <person name="Sadaie Y."/>
            <person name="Sato T."/>
            <person name="Scanlan E."/>
            <person name="Schleich S."/>
            <person name="Schroeter R."/>
            <person name="Scoffone F."/>
            <person name="Sekiguchi J."/>
            <person name="Sekowska A."/>
            <person name="Seror S.J."/>
            <person name="Serror P."/>
            <person name="Shin B.-S."/>
            <person name="Soldo B."/>
            <person name="Sorokin A."/>
            <person name="Tacconi E."/>
            <person name="Takagi T."/>
            <person name="Takahashi H."/>
            <person name="Takemaru K."/>
            <person name="Takeuchi M."/>
            <person name="Tamakoshi A."/>
            <person name="Tanaka T."/>
            <person name="Terpstra P."/>
            <person name="Tognoni A."/>
            <person name="Tosato V."/>
            <person name="Uchiyama S."/>
            <person name="Vandenbol M."/>
            <person name="Vannier F."/>
            <person name="Vassarotti A."/>
            <person name="Viari A."/>
            <person name="Wambutt R."/>
            <person name="Wedler E."/>
            <person name="Wedler H."/>
            <person name="Weitzenegger T."/>
            <person name="Winters P."/>
            <person name="Wipat A."/>
            <person name="Yamamoto H."/>
            <person name="Yamane K."/>
            <person name="Yasumoto K."/>
            <person name="Yata K."/>
            <person name="Yoshida K."/>
            <person name="Yoshikawa H.-F."/>
            <person name="Zumstein E."/>
            <person name="Yoshikawa H."/>
            <person name="Danchin A."/>
        </authorList>
    </citation>
    <scope>NUCLEOTIDE SEQUENCE [LARGE SCALE GENOMIC DNA]</scope>
    <source>
        <strain>168</strain>
    </source>
</reference>
<reference key="3">
    <citation type="journal article" date="2009" name="Microbiology">
        <title>From a consortium sequence to a unified sequence: the Bacillus subtilis 168 reference genome a decade later.</title>
        <authorList>
            <person name="Barbe V."/>
            <person name="Cruveiller S."/>
            <person name="Kunst F."/>
            <person name="Lenoble P."/>
            <person name="Meurice G."/>
            <person name="Sekowska A."/>
            <person name="Vallenet D."/>
            <person name="Wang T."/>
            <person name="Moszer I."/>
            <person name="Medigue C."/>
            <person name="Danchin A."/>
        </authorList>
    </citation>
    <scope>SEQUENCE REVISION TO 129 AND C-TERMINUS</scope>
</reference>
<feature type="chain" id="PRO_0000375891" description="Putative oligopeptide transport ATP-binding protein YkfD">
    <location>
        <begin position="1"/>
        <end position="329"/>
    </location>
</feature>
<feature type="domain" description="ABC transporter" evidence="1">
    <location>
        <begin position="7"/>
        <end position="252"/>
    </location>
</feature>
<feature type="binding site" evidence="1">
    <location>
        <begin position="44"/>
        <end position="51"/>
    </location>
    <ligand>
        <name>ATP</name>
        <dbReference type="ChEBI" id="CHEBI:30616"/>
    </ligand>
</feature>
<feature type="sequence conflict" description="In Ref. 1; CAA05580." evidence="2" ref="1">
    <original>L</original>
    <variation>S</variation>
    <location>
        <position position="129"/>
    </location>
</feature>
<gene>
    <name type="primary">ykfD</name>
    <name type="ordered locus">BSU13000</name>
</gene>
<dbReference type="EC" id="7.4.2.-"/>
<dbReference type="EMBL" id="AJ002571">
    <property type="protein sequence ID" value="CAA05580.1"/>
    <property type="status" value="ALT_FRAME"/>
    <property type="molecule type" value="Genomic_DNA"/>
</dbReference>
<dbReference type="EMBL" id="AL009126">
    <property type="protein sequence ID" value="CAB13157.2"/>
    <property type="molecule type" value="Genomic_DNA"/>
</dbReference>
<dbReference type="PIR" id="B69856">
    <property type="entry name" value="B69856"/>
</dbReference>
<dbReference type="RefSeq" id="NP_389183.2">
    <property type="nucleotide sequence ID" value="NC_000964.3"/>
</dbReference>
<dbReference type="RefSeq" id="WP_009967074.1">
    <property type="nucleotide sequence ID" value="NZ_OZ025638.1"/>
</dbReference>
<dbReference type="SMR" id="C0SP98"/>
<dbReference type="FunCoup" id="C0SP98">
    <property type="interactions" value="245"/>
</dbReference>
<dbReference type="STRING" id="224308.BSU13000"/>
<dbReference type="PaxDb" id="224308-BSU13000"/>
<dbReference type="EnsemblBacteria" id="CAB13157">
    <property type="protein sequence ID" value="CAB13157"/>
    <property type="gene ID" value="BSU_13000"/>
</dbReference>
<dbReference type="GeneID" id="939863"/>
<dbReference type="KEGG" id="bsu:BSU13000"/>
<dbReference type="PATRIC" id="fig|224308.179.peg.1412"/>
<dbReference type="eggNOG" id="COG4608">
    <property type="taxonomic scope" value="Bacteria"/>
</dbReference>
<dbReference type="InParanoid" id="C0SP98"/>
<dbReference type="OrthoDB" id="9802264at2"/>
<dbReference type="PhylomeDB" id="C0SP98"/>
<dbReference type="BioCyc" id="BSUB:BSU13000-MONOMER"/>
<dbReference type="Proteomes" id="UP000001570">
    <property type="component" value="Chromosome"/>
</dbReference>
<dbReference type="GO" id="GO:0005524">
    <property type="term" value="F:ATP binding"/>
    <property type="evidence" value="ECO:0007669"/>
    <property type="project" value="UniProtKB-KW"/>
</dbReference>
<dbReference type="GO" id="GO:0016887">
    <property type="term" value="F:ATP hydrolysis activity"/>
    <property type="evidence" value="ECO:0007669"/>
    <property type="project" value="InterPro"/>
</dbReference>
<dbReference type="GO" id="GO:0015833">
    <property type="term" value="P:peptide transport"/>
    <property type="evidence" value="ECO:0007669"/>
    <property type="project" value="InterPro"/>
</dbReference>
<dbReference type="GO" id="GO:0055085">
    <property type="term" value="P:transmembrane transport"/>
    <property type="evidence" value="ECO:0007669"/>
    <property type="project" value="UniProtKB-ARBA"/>
</dbReference>
<dbReference type="CDD" id="cd03257">
    <property type="entry name" value="ABC_NikE_OppD_transporters"/>
    <property type="match status" value="1"/>
</dbReference>
<dbReference type="FunFam" id="3.40.50.300:FF:000016">
    <property type="entry name" value="Oligopeptide ABC transporter ATP-binding component"/>
    <property type="match status" value="1"/>
</dbReference>
<dbReference type="Gene3D" id="3.40.50.300">
    <property type="entry name" value="P-loop containing nucleotide triphosphate hydrolases"/>
    <property type="match status" value="1"/>
</dbReference>
<dbReference type="InterPro" id="IPR003593">
    <property type="entry name" value="AAA+_ATPase"/>
</dbReference>
<dbReference type="InterPro" id="IPR050319">
    <property type="entry name" value="ABC_transp_ATP-bind"/>
</dbReference>
<dbReference type="InterPro" id="IPR003439">
    <property type="entry name" value="ABC_transporter-like_ATP-bd"/>
</dbReference>
<dbReference type="InterPro" id="IPR017871">
    <property type="entry name" value="ABC_transporter-like_CS"/>
</dbReference>
<dbReference type="InterPro" id="IPR013563">
    <property type="entry name" value="Oligopep_ABC_C"/>
</dbReference>
<dbReference type="InterPro" id="IPR027417">
    <property type="entry name" value="P-loop_NTPase"/>
</dbReference>
<dbReference type="NCBIfam" id="TIGR01727">
    <property type="entry name" value="oligo_HPY"/>
    <property type="match status" value="1"/>
</dbReference>
<dbReference type="PANTHER" id="PTHR43776:SF7">
    <property type="entry name" value="D,D-DIPEPTIDE TRANSPORT ATP-BINDING PROTEIN DDPF-RELATED"/>
    <property type="match status" value="1"/>
</dbReference>
<dbReference type="PANTHER" id="PTHR43776">
    <property type="entry name" value="TRANSPORT ATP-BINDING PROTEIN"/>
    <property type="match status" value="1"/>
</dbReference>
<dbReference type="Pfam" id="PF00005">
    <property type="entry name" value="ABC_tran"/>
    <property type="match status" value="1"/>
</dbReference>
<dbReference type="Pfam" id="PF08352">
    <property type="entry name" value="oligo_HPY"/>
    <property type="match status" value="1"/>
</dbReference>
<dbReference type="SMART" id="SM00382">
    <property type="entry name" value="AAA"/>
    <property type="match status" value="1"/>
</dbReference>
<dbReference type="SUPFAM" id="SSF52540">
    <property type="entry name" value="P-loop containing nucleoside triphosphate hydrolases"/>
    <property type="match status" value="1"/>
</dbReference>
<dbReference type="PROSITE" id="PS00211">
    <property type="entry name" value="ABC_TRANSPORTER_1"/>
    <property type="match status" value="1"/>
</dbReference>
<dbReference type="PROSITE" id="PS50893">
    <property type="entry name" value="ABC_TRANSPORTER_2"/>
    <property type="match status" value="1"/>
</dbReference>